<evidence type="ECO:0000255" key="1">
    <source>
        <dbReference type="HAMAP-Rule" id="MF_01456"/>
    </source>
</evidence>
<feature type="chain" id="PRO_0000390267" description="NADH-quinone oxidoreductase subunit K">
    <location>
        <begin position="1"/>
        <end position="101"/>
    </location>
</feature>
<feature type="transmembrane region" description="Helical" evidence="1">
    <location>
        <begin position="4"/>
        <end position="24"/>
    </location>
</feature>
<feature type="transmembrane region" description="Helical" evidence="1">
    <location>
        <begin position="30"/>
        <end position="50"/>
    </location>
</feature>
<feature type="transmembrane region" description="Helical" evidence="1">
    <location>
        <begin position="61"/>
        <end position="81"/>
    </location>
</feature>
<organism>
    <name type="scientific">Thiobacillus denitrificans (strain ATCC 25259 / T1)</name>
    <dbReference type="NCBI Taxonomy" id="292415"/>
    <lineage>
        <taxon>Bacteria</taxon>
        <taxon>Pseudomonadati</taxon>
        <taxon>Pseudomonadota</taxon>
        <taxon>Betaproteobacteria</taxon>
        <taxon>Nitrosomonadales</taxon>
        <taxon>Thiobacillaceae</taxon>
        <taxon>Thiobacillus</taxon>
    </lineage>
</organism>
<protein>
    <recommendedName>
        <fullName evidence="1">NADH-quinone oxidoreductase subunit K</fullName>
        <ecNumber evidence="1">7.1.1.-</ecNumber>
    </recommendedName>
    <alternativeName>
        <fullName evidence="1">NADH dehydrogenase I subunit K</fullName>
    </alternativeName>
    <alternativeName>
        <fullName evidence="1">NDH-1 subunit K</fullName>
    </alternativeName>
</protein>
<gene>
    <name evidence="1" type="primary">nuoK</name>
    <name type="ordered locus">Tbd_1152</name>
</gene>
<reference key="1">
    <citation type="journal article" date="2006" name="J. Bacteriol.">
        <title>The genome sequence of the obligately chemolithoautotrophic, facultatively anaerobic bacterium Thiobacillus denitrificans.</title>
        <authorList>
            <person name="Beller H.R."/>
            <person name="Chain P.S."/>
            <person name="Letain T.E."/>
            <person name="Chakicherla A."/>
            <person name="Larimer F.W."/>
            <person name="Richardson P.M."/>
            <person name="Coleman M.A."/>
            <person name="Wood A.P."/>
            <person name="Kelly D.P."/>
        </authorList>
    </citation>
    <scope>NUCLEOTIDE SEQUENCE [LARGE SCALE GENOMIC DNA]</scope>
    <source>
        <strain>ATCC 25259 / T1</strain>
    </source>
</reference>
<accession>Q3SJP7</accession>
<comment type="function">
    <text evidence="1">NDH-1 shuttles electrons from NADH, via FMN and iron-sulfur (Fe-S) centers, to quinones in the respiratory chain. The immediate electron acceptor for the enzyme in this species is believed to be ubiquinone. Couples the redox reaction to proton translocation (for every two electrons transferred, four hydrogen ions are translocated across the cytoplasmic membrane), and thus conserves the redox energy in a proton gradient.</text>
</comment>
<comment type="catalytic activity">
    <reaction evidence="1">
        <text>a quinone + NADH + 5 H(+)(in) = a quinol + NAD(+) + 4 H(+)(out)</text>
        <dbReference type="Rhea" id="RHEA:57888"/>
        <dbReference type="ChEBI" id="CHEBI:15378"/>
        <dbReference type="ChEBI" id="CHEBI:24646"/>
        <dbReference type="ChEBI" id="CHEBI:57540"/>
        <dbReference type="ChEBI" id="CHEBI:57945"/>
        <dbReference type="ChEBI" id="CHEBI:132124"/>
    </reaction>
</comment>
<comment type="subunit">
    <text evidence="1">NDH-1 is composed of 14 different subunits. Subunits NuoA, H, J, K, L, M, N constitute the membrane sector of the complex.</text>
</comment>
<comment type="subcellular location">
    <subcellularLocation>
        <location evidence="1">Cell inner membrane</location>
        <topology evidence="1">Multi-pass membrane protein</topology>
    </subcellularLocation>
</comment>
<comment type="similarity">
    <text evidence="1">Belongs to the complex I subunit 4L family.</text>
</comment>
<name>NUOK_THIDA</name>
<keyword id="KW-0997">Cell inner membrane</keyword>
<keyword id="KW-1003">Cell membrane</keyword>
<keyword id="KW-0472">Membrane</keyword>
<keyword id="KW-0520">NAD</keyword>
<keyword id="KW-0874">Quinone</keyword>
<keyword id="KW-1185">Reference proteome</keyword>
<keyword id="KW-1278">Translocase</keyword>
<keyword id="KW-0812">Transmembrane</keyword>
<keyword id="KW-1133">Transmembrane helix</keyword>
<keyword id="KW-0813">Transport</keyword>
<keyword id="KW-0830">Ubiquinone</keyword>
<proteinExistence type="inferred from homology"/>
<dbReference type="EC" id="7.1.1.-" evidence="1"/>
<dbReference type="EMBL" id="CP000116">
    <property type="protein sequence ID" value="AAZ97105.1"/>
    <property type="molecule type" value="Genomic_DNA"/>
</dbReference>
<dbReference type="RefSeq" id="WP_011311664.1">
    <property type="nucleotide sequence ID" value="NC_007404.1"/>
</dbReference>
<dbReference type="SMR" id="Q3SJP7"/>
<dbReference type="STRING" id="292415.Tbd_1152"/>
<dbReference type="KEGG" id="tbd:Tbd_1152"/>
<dbReference type="eggNOG" id="COG0713">
    <property type="taxonomic scope" value="Bacteria"/>
</dbReference>
<dbReference type="HOGENOM" id="CLU_144724_2_0_4"/>
<dbReference type="OrthoDB" id="9801357at2"/>
<dbReference type="Proteomes" id="UP000008291">
    <property type="component" value="Chromosome"/>
</dbReference>
<dbReference type="GO" id="GO:0030964">
    <property type="term" value="C:NADH dehydrogenase complex"/>
    <property type="evidence" value="ECO:0007669"/>
    <property type="project" value="TreeGrafter"/>
</dbReference>
<dbReference type="GO" id="GO:0005886">
    <property type="term" value="C:plasma membrane"/>
    <property type="evidence" value="ECO:0007669"/>
    <property type="project" value="UniProtKB-SubCell"/>
</dbReference>
<dbReference type="GO" id="GO:0050136">
    <property type="term" value="F:NADH:ubiquinone reductase (non-electrogenic) activity"/>
    <property type="evidence" value="ECO:0007669"/>
    <property type="project" value="UniProtKB-UniRule"/>
</dbReference>
<dbReference type="GO" id="GO:0048038">
    <property type="term" value="F:quinone binding"/>
    <property type="evidence" value="ECO:0007669"/>
    <property type="project" value="UniProtKB-KW"/>
</dbReference>
<dbReference type="GO" id="GO:0042773">
    <property type="term" value="P:ATP synthesis coupled electron transport"/>
    <property type="evidence" value="ECO:0007669"/>
    <property type="project" value="InterPro"/>
</dbReference>
<dbReference type="FunFam" id="1.10.287.3510:FF:000001">
    <property type="entry name" value="NADH-quinone oxidoreductase subunit K"/>
    <property type="match status" value="1"/>
</dbReference>
<dbReference type="Gene3D" id="1.10.287.3510">
    <property type="match status" value="1"/>
</dbReference>
<dbReference type="HAMAP" id="MF_01456">
    <property type="entry name" value="NDH1_NuoK"/>
    <property type="match status" value="1"/>
</dbReference>
<dbReference type="InterPro" id="IPR001133">
    <property type="entry name" value="NADH_UbQ_OxRdtase_chain4L/K"/>
</dbReference>
<dbReference type="InterPro" id="IPR039428">
    <property type="entry name" value="NUOK/Mnh_C1-like"/>
</dbReference>
<dbReference type="NCBIfam" id="NF004320">
    <property type="entry name" value="PRK05715.1-2"/>
    <property type="match status" value="1"/>
</dbReference>
<dbReference type="NCBIfam" id="NF004321">
    <property type="entry name" value="PRK05715.1-3"/>
    <property type="match status" value="1"/>
</dbReference>
<dbReference type="NCBIfam" id="NF004323">
    <property type="entry name" value="PRK05715.1-5"/>
    <property type="match status" value="1"/>
</dbReference>
<dbReference type="PANTHER" id="PTHR11434:SF21">
    <property type="entry name" value="NADH DEHYDROGENASE SUBUNIT 4L-RELATED"/>
    <property type="match status" value="1"/>
</dbReference>
<dbReference type="PANTHER" id="PTHR11434">
    <property type="entry name" value="NADH-UBIQUINONE OXIDOREDUCTASE SUBUNIT ND4L"/>
    <property type="match status" value="1"/>
</dbReference>
<dbReference type="Pfam" id="PF00420">
    <property type="entry name" value="Oxidored_q2"/>
    <property type="match status" value="1"/>
</dbReference>
<sequence length="101" mass="11071">MISLSHFLVLGGVLFAIAVLGIFLNRKNVIVLLMAIELMLLAVNMNFIAFSHYLGDVHGQVFVFFILTVAAAESAIGLAILVLLFRNLRTINVDDLDQLKG</sequence>